<dbReference type="EC" id="1.18.1.2" evidence="1"/>
<dbReference type="EMBL" id="CP001022">
    <property type="protein sequence ID" value="ACB62219.1"/>
    <property type="molecule type" value="Genomic_DNA"/>
</dbReference>
<dbReference type="RefSeq" id="WP_012371635.1">
    <property type="nucleotide sequence ID" value="NC_010556.1"/>
</dbReference>
<dbReference type="SMR" id="B1YEQ1"/>
<dbReference type="STRING" id="262543.Exig_2773"/>
<dbReference type="KEGG" id="esi:Exig_2773"/>
<dbReference type="eggNOG" id="COG0492">
    <property type="taxonomic scope" value="Bacteria"/>
</dbReference>
<dbReference type="HOGENOM" id="CLU_031864_5_5_9"/>
<dbReference type="OrthoDB" id="9806179at2"/>
<dbReference type="Proteomes" id="UP000001681">
    <property type="component" value="Chromosome"/>
</dbReference>
<dbReference type="GO" id="GO:0004324">
    <property type="term" value="F:ferredoxin-NADP+ reductase activity"/>
    <property type="evidence" value="ECO:0007669"/>
    <property type="project" value="UniProtKB-UniRule"/>
</dbReference>
<dbReference type="GO" id="GO:0050660">
    <property type="term" value="F:flavin adenine dinucleotide binding"/>
    <property type="evidence" value="ECO:0007669"/>
    <property type="project" value="UniProtKB-UniRule"/>
</dbReference>
<dbReference type="GO" id="GO:0050661">
    <property type="term" value="F:NADP binding"/>
    <property type="evidence" value="ECO:0007669"/>
    <property type="project" value="UniProtKB-UniRule"/>
</dbReference>
<dbReference type="Gene3D" id="3.50.50.60">
    <property type="entry name" value="FAD/NAD(P)-binding domain"/>
    <property type="match status" value="2"/>
</dbReference>
<dbReference type="HAMAP" id="MF_01685">
    <property type="entry name" value="FENR2"/>
    <property type="match status" value="1"/>
</dbReference>
<dbReference type="InterPro" id="IPR036188">
    <property type="entry name" value="FAD/NAD-bd_sf"/>
</dbReference>
<dbReference type="InterPro" id="IPR023753">
    <property type="entry name" value="FAD/NAD-binding_dom"/>
</dbReference>
<dbReference type="InterPro" id="IPR022890">
    <property type="entry name" value="Fd--NADP_Rdtase_type_2"/>
</dbReference>
<dbReference type="InterPro" id="IPR050097">
    <property type="entry name" value="Ferredoxin-NADP_redctase_2"/>
</dbReference>
<dbReference type="PANTHER" id="PTHR48105">
    <property type="entry name" value="THIOREDOXIN REDUCTASE 1-RELATED-RELATED"/>
    <property type="match status" value="1"/>
</dbReference>
<dbReference type="Pfam" id="PF07992">
    <property type="entry name" value="Pyr_redox_2"/>
    <property type="match status" value="1"/>
</dbReference>
<dbReference type="PRINTS" id="PR00368">
    <property type="entry name" value="FADPNR"/>
</dbReference>
<dbReference type="PRINTS" id="PR00469">
    <property type="entry name" value="PNDRDTASEII"/>
</dbReference>
<dbReference type="SUPFAM" id="SSF51905">
    <property type="entry name" value="FAD/NAD(P)-binding domain"/>
    <property type="match status" value="1"/>
</dbReference>
<organism>
    <name type="scientific">Exiguobacterium sibiricum (strain DSM 17290 / CCUG 55495 / CIP 109462 / JCM 13490 / 255-15)</name>
    <dbReference type="NCBI Taxonomy" id="262543"/>
    <lineage>
        <taxon>Bacteria</taxon>
        <taxon>Bacillati</taxon>
        <taxon>Bacillota</taxon>
        <taxon>Bacilli</taxon>
        <taxon>Bacillales</taxon>
        <taxon>Bacillales Family XII. Incertae Sedis</taxon>
        <taxon>Exiguobacterium</taxon>
    </lineage>
</organism>
<proteinExistence type="inferred from homology"/>
<sequence>MEQQELFDVTVIGGGPAGLYSTFYSGLRGMKTKLIEYQAELGGKIHVYPEKMIWDVGGQPPITGAKLMEQLVEQGLTFNPTVHLNEKIISITKDVFGNFVLEAESGMIHYSKTVIVAVGGGILNPQKLKIEGAERYEVSNLNYTVKSIERFKDKTVIISGGGNSAIDWANELEPVAKKVYVTYRKDCFTGHEAQVEQLVNSSAVCLLNTTIHKLIASDDHHRIASVELIDCTTNETVALEIDEVIINHGYEQDAELLANCDLDLQQVDDFYIAGTASSESSVPGLYAAGDILSHEGKVHLISGAFQDAANAVNRAKKYIEPEAPKVAMVSSHNEVFKKRNRELIQEMVNQNR</sequence>
<evidence type="ECO:0000255" key="1">
    <source>
        <dbReference type="HAMAP-Rule" id="MF_01685"/>
    </source>
</evidence>
<gene>
    <name type="ordered locus">Exig_2773</name>
</gene>
<comment type="catalytic activity">
    <reaction evidence="1">
        <text>2 reduced [2Fe-2S]-[ferredoxin] + NADP(+) + H(+) = 2 oxidized [2Fe-2S]-[ferredoxin] + NADPH</text>
        <dbReference type="Rhea" id="RHEA:20125"/>
        <dbReference type="Rhea" id="RHEA-COMP:10000"/>
        <dbReference type="Rhea" id="RHEA-COMP:10001"/>
        <dbReference type="ChEBI" id="CHEBI:15378"/>
        <dbReference type="ChEBI" id="CHEBI:33737"/>
        <dbReference type="ChEBI" id="CHEBI:33738"/>
        <dbReference type="ChEBI" id="CHEBI:57783"/>
        <dbReference type="ChEBI" id="CHEBI:58349"/>
        <dbReference type="EC" id="1.18.1.2"/>
    </reaction>
</comment>
<comment type="cofactor">
    <cofactor evidence="1">
        <name>FAD</name>
        <dbReference type="ChEBI" id="CHEBI:57692"/>
    </cofactor>
    <text evidence="1">Binds 1 FAD per subunit.</text>
</comment>
<comment type="subunit">
    <text evidence="1">Homodimer.</text>
</comment>
<comment type="similarity">
    <text evidence="1">Belongs to the ferredoxin--NADP reductase type 2 family.</text>
</comment>
<keyword id="KW-0274">FAD</keyword>
<keyword id="KW-0285">Flavoprotein</keyword>
<keyword id="KW-0521">NADP</keyword>
<keyword id="KW-0560">Oxidoreductase</keyword>
<keyword id="KW-1185">Reference proteome</keyword>
<reference key="1">
    <citation type="submission" date="2008-04" db="EMBL/GenBank/DDBJ databases">
        <title>Complete sequence of chromosome of Exiguobacterium sibiricum 255-15.</title>
        <authorList>
            <consortium name="US DOE Joint Genome Institute"/>
            <person name="Copeland A."/>
            <person name="Lucas S."/>
            <person name="Lapidus A."/>
            <person name="Glavina del Rio T."/>
            <person name="Dalin E."/>
            <person name="Tice H."/>
            <person name="Bruce D."/>
            <person name="Goodwin L."/>
            <person name="Pitluck S."/>
            <person name="Kiss H."/>
            <person name="Chertkov O."/>
            <person name="Monk C."/>
            <person name="Brettin T."/>
            <person name="Detter J.C."/>
            <person name="Han C."/>
            <person name="Kuske C.R."/>
            <person name="Schmutz J."/>
            <person name="Larimer F."/>
            <person name="Land M."/>
            <person name="Hauser L."/>
            <person name="Kyrpides N."/>
            <person name="Mikhailova N."/>
            <person name="Vishnivetskaya T."/>
            <person name="Rodrigues D.F."/>
            <person name="Gilichinsky D."/>
            <person name="Tiedje J."/>
            <person name="Richardson P."/>
        </authorList>
    </citation>
    <scope>NUCLEOTIDE SEQUENCE [LARGE SCALE GENOMIC DNA]</scope>
    <source>
        <strain>DSM 17290 / CCUG 55495 / CIP 109462 / JCM 13490 / 255-15</strain>
    </source>
</reference>
<name>FENR2_EXIS2</name>
<protein>
    <recommendedName>
        <fullName evidence="1">Ferredoxin--NADP reductase 2</fullName>
        <shortName evidence="1">FNR 2</shortName>
        <shortName evidence="1">Fd-NADP(+) reductase 2</shortName>
        <ecNumber evidence="1">1.18.1.2</ecNumber>
    </recommendedName>
</protein>
<feature type="chain" id="PRO_0000364835" description="Ferredoxin--NADP reductase 2">
    <location>
        <begin position="1"/>
        <end position="352"/>
    </location>
</feature>
<feature type="binding site" evidence="1">
    <location>
        <position position="36"/>
    </location>
    <ligand>
        <name>FAD</name>
        <dbReference type="ChEBI" id="CHEBI:57692"/>
    </ligand>
</feature>
<feature type="binding site" evidence="1">
    <location>
        <position position="44"/>
    </location>
    <ligand>
        <name>FAD</name>
        <dbReference type="ChEBI" id="CHEBI:57692"/>
    </ligand>
</feature>
<feature type="binding site" evidence="1">
    <location>
        <position position="48"/>
    </location>
    <ligand>
        <name>FAD</name>
        <dbReference type="ChEBI" id="CHEBI:57692"/>
    </ligand>
</feature>
<feature type="binding site" evidence="1">
    <location>
        <position position="88"/>
    </location>
    <ligand>
        <name>FAD</name>
        <dbReference type="ChEBI" id="CHEBI:57692"/>
    </ligand>
</feature>
<feature type="binding site" evidence="1">
    <location>
        <position position="123"/>
    </location>
    <ligand>
        <name>FAD</name>
        <dbReference type="ChEBI" id="CHEBI:57692"/>
    </ligand>
</feature>
<feature type="binding site" evidence="1">
    <location>
        <position position="290"/>
    </location>
    <ligand>
        <name>FAD</name>
        <dbReference type="ChEBI" id="CHEBI:57692"/>
    </ligand>
</feature>
<feature type="binding site" evidence="1">
    <location>
        <position position="331"/>
    </location>
    <ligand>
        <name>FAD</name>
        <dbReference type="ChEBI" id="CHEBI:57692"/>
    </ligand>
</feature>
<accession>B1YEQ1</accession>